<reference key="1">
    <citation type="journal article" date="2001" name="Lancet">
        <title>Whole genome sequencing of meticillin-resistant Staphylococcus aureus.</title>
        <authorList>
            <person name="Kuroda M."/>
            <person name="Ohta T."/>
            <person name="Uchiyama I."/>
            <person name="Baba T."/>
            <person name="Yuzawa H."/>
            <person name="Kobayashi I."/>
            <person name="Cui L."/>
            <person name="Oguchi A."/>
            <person name="Aoki K."/>
            <person name="Nagai Y."/>
            <person name="Lian J.-Q."/>
            <person name="Ito T."/>
            <person name="Kanamori M."/>
            <person name="Matsumaru H."/>
            <person name="Maruyama A."/>
            <person name="Murakami H."/>
            <person name="Hosoyama A."/>
            <person name="Mizutani-Ui Y."/>
            <person name="Takahashi N.K."/>
            <person name="Sawano T."/>
            <person name="Inoue R."/>
            <person name="Kaito C."/>
            <person name="Sekimizu K."/>
            <person name="Hirakawa H."/>
            <person name="Kuhara S."/>
            <person name="Goto S."/>
            <person name="Yabuzaki J."/>
            <person name="Kanehisa M."/>
            <person name="Yamashita A."/>
            <person name="Oshima K."/>
            <person name="Furuya K."/>
            <person name="Yoshino C."/>
            <person name="Shiba T."/>
            <person name="Hattori M."/>
            <person name="Ogasawara N."/>
            <person name="Hayashi H."/>
            <person name="Hiramatsu K."/>
        </authorList>
    </citation>
    <scope>NUCLEOTIDE SEQUENCE [LARGE SCALE GENOMIC DNA]</scope>
    <source>
        <strain>Mu50 / ATCC 700699</strain>
    </source>
</reference>
<gene>
    <name type="primary">hlgA</name>
    <name type="synonym">hlg2</name>
    <name type="ordered locus">SAV2419</name>
</gene>
<comment type="function">
    <text evidence="1">Toxin that seems to act by forming pores in the membrane of the cell. Has a hemolytic and a leucotoxic activity (By similarity).</text>
</comment>
<comment type="subunit">
    <text evidence="1">Toxicity requires sequential binding and synergistic association of a class S and a class F component which form heterooligomeric complexes. HlgA (class S) associates with HlgB (class F) thus forming an AB toxin in strains producing both gamma-hemolysins and leukocidins. HlgA and LukF-PV can also form a complex (By similarity).</text>
</comment>
<comment type="interaction">
    <interactant intactId="EBI-16223478">
        <id>P0A071</id>
    </interactant>
    <interactant intactId="EBI-16223472">
        <id>A0A0H3JX61</id>
        <label>hlgB</label>
    </interactant>
    <organismsDiffer>false</organismsDiffer>
    <experiments>2</experiments>
</comment>
<comment type="subcellular location">
    <subcellularLocation>
        <location evidence="1">Secreted</location>
    </subcellularLocation>
</comment>
<comment type="similarity">
    <text evidence="2">Belongs to the aerolysin family.</text>
</comment>
<feature type="signal peptide" evidence="1">
    <location>
        <begin position="1"/>
        <end position="29"/>
    </location>
</feature>
<feature type="chain" id="PRO_0000018419" description="Gamma-hemolysin component A">
    <location>
        <begin position="30"/>
        <end position="309"/>
    </location>
</feature>
<feature type="strand" evidence="3">
    <location>
        <begin position="42"/>
        <end position="51"/>
    </location>
</feature>
<feature type="turn" evidence="3">
    <location>
        <begin position="52"/>
        <end position="55"/>
    </location>
</feature>
<feature type="strand" evidence="3">
    <location>
        <begin position="56"/>
        <end position="65"/>
    </location>
</feature>
<feature type="strand" evidence="3">
    <location>
        <begin position="70"/>
        <end position="84"/>
    </location>
</feature>
<feature type="strand" evidence="3">
    <location>
        <begin position="88"/>
        <end position="91"/>
    </location>
</feature>
<feature type="strand" evidence="3">
    <location>
        <begin position="98"/>
        <end position="113"/>
    </location>
</feature>
<feature type="strand" evidence="3">
    <location>
        <begin position="118"/>
        <end position="125"/>
    </location>
</feature>
<feature type="strand" evidence="3">
    <location>
        <begin position="131"/>
        <end position="147"/>
    </location>
</feature>
<feature type="turn" evidence="3">
    <location>
        <begin position="148"/>
        <end position="150"/>
    </location>
</feature>
<feature type="strand" evidence="3">
    <location>
        <begin position="151"/>
        <end position="179"/>
    </location>
</feature>
<feature type="strand" evidence="3">
    <location>
        <begin position="182"/>
        <end position="189"/>
    </location>
</feature>
<feature type="strand" evidence="3">
    <location>
        <begin position="191"/>
        <end position="194"/>
    </location>
</feature>
<feature type="strand" evidence="3">
    <location>
        <begin position="197"/>
        <end position="200"/>
    </location>
</feature>
<feature type="turn" evidence="3">
    <location>
        <begin position="204"/>
        <end position="207"/>
    </location>
</feature>
<feature type="strand" evidence="3">
    <location>
        <begin position="212"/>
        <end position="215"/>
    </location>
</feature>
<feature type="helix" evidence="3">
    <location>
        <begin position="216"/>
        <end position="219"/>
    </location>
</feature>
<feature type="helix" evidence="3">
    <location>
        <begin position="223"/>
        <end position="225"/>
    </location>
</feature>
<feature type="helix" evidence="3">
    <location>
        <begin position="228"/>
        <end position="231"/>
    </location>
</feature>
<feature type="strand" evidence="3">
    <location>
        <begin position="237"/>
        <end position="244"/>
    </location>
</feature>
<feature type="strand" evidence="3">
    <location>
        <begin position="246"/>
        <end position="248"/>
    </location>
</feature>
<feature type="strand" evidence="3">
    <location>
        <begin position="250"/>
        <end position="270"/>
    </location>
</feature>
<feature type="strand" evidence="3">
    <location>
        <begin position="273"/>
        <end position="295"/>
    </location>
</feature>
<feature type="turn" evidence="3">
    <location>
        <begin position="296"/>
        <end position="299"/>
    </location>
</feature>
<feature type="strand" evidence="3">
    <location>
        <begin position="300"/>
        <end position="307"/>
    </location>
</feature>
<protein>
    <recommendedName>
        <fullName>Gamma-hemolysin component A</fullName>
    </recommendedName>
    <alternativeName>
        <fullName>H-gamma-2</fullName>
    </alternativeName>
    <alternativeName>
        <fullName>H-gamma-II</fullName>
    </alternativeName>
</protein>
<dbReference type="EMBL" id="BA000017">
    <property type="protein sequence ID" value="BAB58581.1"/>
    <property type="molecule type" value="Genomic_DNA"/>
</dbReference>
<dbReference type="RefSeq" id="WP_000594519.1">
    <property type="nucleotide sequence ID" value="NC_002758.2"/>
</dbReference>
<dbReference type="PDB" id="3B07">
    <property type="method" value="X-ray"/>
    <property type="resolution" value="2.50 A"/>
    <property type="chains" value="B/D/F/H=30-309"/>
</dbReference>
<dbReference type="PDB" id="4P1Y">
    <property type="method" value="X-ray"/>
    <property type="resolution" value="2.99 A"/>
    <property type="chains" value="B/D/F/H=42-309"/>
</dbReference>
<dbReference type="PDBsum" id="3B07"/>
<dbReference type="PDBsum" id="4P1Y"/>
<dbReference type="SMR" id="P0A071"/>
<dbReference type="DIP" id="DIP-59713N"/>
<dbReference type="IntAct" id="P0A071">
    <property type="interactions" value="1"/>
</dbReference>
<dbReference type="KEGG" id="sav:SAV2419"/>
<dbReference type="HOGENOM" id="CLU_075311_0_0_9"/>
<dbReference type="PhylomeDB" id="P0A071"/>
<dbReference type="EvolutionaryTrace" id="P0A071"/>
<dbReference type="Proteomes" id="UP000002481">
    <property type="component" value="Chromosome"/>
</dbReference>
<dbReference type="GO" id="GO:0005576">
    <property type="term" value="C:extracellular region"/>
    <property type="evidence" value="ECO:0007669"/>
    <property type="project" value="UniProtKB-SubCell"/>
</dbReference>
<dbReference type="GO" id="GO:0090729">
    <property type="term" value="F:toxin activity"/>
    <property type="evidence" value="ECO:0007669"/>
    <property type="project" value="UniProtKB-KW"/>
</dbReference>
<dbReference type="GO" id="GO:0051715">
    <property type="term" value="P:cytolysis in another organism"/>
    <property type="evidence" value="ECO:0007669"/>
    <property type="project" value="InterPro"/>
</dbReference>
<dbReference type="Gene3D" id="2.70.240.10">
    <property type="entry name" value="Leukocidin/porin MspA"/>
    <property type="match status" value="1"/>
</dbReference>
<dbReference type="InterPro" id="IPR003963">
    <property type="entry name" value="Bi-component_toxin_staph"/>
</dbReference>
<dbReference type="InterPro" id="IPR016183">
    <property type="entry name" value="Leukocidin/Hemolysin_toxin"/>
</dbReference>
<dbReference type="InterPro" id="IPR036435">
    <property type="entry name" value="Leukocidin/porin_MspA_sf"/>
</dbReference>
<dbReference type="NCBIfam" id="TIGR01002">
    <property type="entry name" value="hlyII"/>
    <property type="match status" value="1"/>
</dbReference>
<dbReference type="Pfam" id="PF07968">
    <property type="entry name" value="Leukocidin"/>
    <property type="match status" value="1"/>
</dbReference>
<dbReference type="PRINTS" id="PR01468">
    <property type="entry name" value="BICOMPNTOXIN"/>
</dbReference>
<dbReference type="SUPFAM" id="SSF56959">
    <property type="entry name" value="Leukocidin-like"/>
    <property type="match status" value="1"/>
</dbReference>
<keyword id="KW-0002">3D-structure</keyword>
<keyword id="KW-0204">Cytolysis</keyword>
<keyword id="KW-0354">Hemolysis</keyword>
<keyword id="KW-0964">Secreted</keyword>
<keyword id="KW-0732">Signal</keyword>
<keyword id="KW-0800">Toxin</keyword>
<keyword id="KW-0843">Virulence</keyword>
<accession>P0A071</accession>
<accession>P31714</accession>
<accession>Q07225</accession>
<accession>Q53689</accession>
<accession>Q53690</accession>
<organism>
    <name type="scientific">Staphylococcus aureus (strain Mu50 / ATCC 700699)</name>
    <dbReference type="NCBI Taxonomy" id="158878"/>
    <lineage>
        <taxon>Bacteria</taxon>
        <taxon>Bacillati</taxon>
        <taxon>Bacillota</taxon>
        <taxon>Bacilli</taxon>
        <taxon>Bacillales</taxon>
        <taxon>Staphylococcaceae</taxon>
        <taxon>Staphylococcus</taxon>
    </lineage>
</organism>
<proteinExistence type="evidence at protein level"/>
<name>HLGA_STAAM</name>
<evidence type="ECO:0000250" key="1"/>
<evidence type="ECO:0000305" key="2"/>
<evidence type="ECO:0007829" key="3">
    <source>
        <dbReference type="PDB" id="3B07"/>
    </source>
</evidence>
<sequence>MIKNKILTATLAVGLIAPLANPFIEISKAENKIEDIGQGAEIIKRTQDITSKRLAITQNIQFDFVKDKKYNKDALVVKMQGFISSRTTYSDLKKYPYIKRMIWPFQYNISLKTKDSNVDLINYLPKNKIDSADVSQKLGYNIGGNFQSAPSIGGSGSFNYSKTISYNQKNYVTEVESQNSKGVKWGVKANSFVTPNGQVSAYDQYLFAQDPTGPAARDYFVPDNQLPPLIQSGFNPSFITTLSHERGKGDKSEFEITYGRNMDATYAYVTRHRLAVDRKHDAFKNRNVTVKYEVNWKTHEVKIKSITPK</sequence>